<organism>
    <name type="scientific">Mycobacterium tuberculosis (strain ATCC 25618 / H37Rv)</name>
    <dbReference type="NCBI Taxonomy" id="83332"/>
    <lineage>
        <taxon>Bacteria</taxon>
        <taxon>Bacillati</taxon>
        <taxon>Actinomycetota</taxon>
        <taxon>Actinomycetes</taxon>
        <taxon>Mycobacteriales</taxon>
        <taxon>Mycobacteriaceae</taxon>
        <taxon>Mycobacterium</taxon>
        <taxon>Mycobacterium tuberculosis complex</taxon>
    </lineage>
</organism>
<name>FBID_MYCTU</name>
<accession>P9WP83</accession>
<accession>L0TDZ2</accession>
<accession>P95112</accession>
<accession>Q7D6B3</accession>
<protein>
    <recommendedName>
        <fullName evidence="1 3">Phosphoenolpyruvate guanylyltransferase</fullName>
        <shortName evidence="1">PEP guanylyltransferase</shortName>
        <ecNumber evidence="1 2">2.7.7.105</ecNumber>
    </recommendedName>
</protein>
<sequence length="214" mass="21819">MSGTPDDGDIGLIIAVKRLAAAKTRLAPVFSAQTRENVVLAMLVDTLTAAAGVGSLRSITVITPDEAAAAAAAGLGADVLADPTPEDDPDPLNTAITAAERVVAEGASNIVVLQGDLPALQTQELAEAISAARHHRRSFVADRLGTGTAVLCAFGTALHPRFGPDSSARHRRSGAVELTGAWPGLRCDVDTPADLTAARQLGVGPATARAVAHR</sequence>
<proteinExistence type="evidence at protein level"/>
<gene>
    <name evidence="1 3" type="primary">fbiD</name>
    <name type="ordered locus">Rv2983</name>
</gene>
<feature type="chain" id="PRO_0000398696" description="Phosphoenolpyruvate guanylyltransferase">
    <location>
        <begin position="1"/>
        <end position="214"/>
    </location>
</feature>
<feature type="binding site" evidence="2">
    <location>
        <position position="148"/>
    </location>
    <ligand>
        <name>phosphoenolpyruvate</name>
        <dbReference type="ChEBI" id="CHEBI:58702"/>
    </ligand>
</feature>
<feature type="binding site" evidence="2">
    <location>
        <position position="163"/>
    </location>
    <ligand>
        <name>phosphoenolpyruvate</name>
        <dbReference type="ChEBI" id="CHEBI:58702"/>
    </ligand>
</feature>
<feature type="binding site" evidence="2">
    <location>
        <position position="166"/>
    </location>
    <ligand>
        <name>phosphoenolpyruvate</name>
        <dbReference type="ChEBI" id="CHEBI:58702"/>
    </ligand>
</feature>
<feature type="strand" evidence="4">
    <location>
        <begin position="10"/>
        <end position="15"/>
    </location>
</feature>
<feature type="turn" evidence="4">
    <location>
        <begin position="19"/>
        <end position="21"/>
    </location>
</feature>
<feature type="helix" evidence="4">
    <location>
        <begin position="24"/>
        <end position="29"/>
    </location>
</feature>
<feature type="helix" evidence="4">
    <location>
        <begin position="32"/>
        <end position="50"/>
    </location>
</feature>
<feature type="strand" evidence="4">
    <location>
        <begin position="56"/>
        <end position="64"/>
    </location>
</feature>
<feature type="helix" evidence="4">
    <location>
        <begin position="66"/>
        <end position="73"/>
    </location>
</feature>
<feature type="turn" evidence="4">
    <location>
        <begin position="74"/>
        <end position="76"/>
    </location>
</feature>
<feature type="strand" evidence="4">
    <location>
        <begin position="78"/>
        <end position="81"/>
    </location>
</feature>
<feature type="helix" evidence="4">
    <location>
        <begin position="91"/>
        <end position="103"/>
    </location>
</feature>
<feature type="turn" evidence="4">
    <location>
        <begin position="104"/>
        <end position="106"/>
    </location>
</feature>
<feature type="strand" evidence="4">
    <location>
        <begin position="108"/>
        <end position="113"/>
    </location>
</feature>
<feature type="helix" evidence="4">
    <location>
        <begin position="122"/>
        <end position="132"/>
    </location>
</feature>
<feature type="strand" evidence="4">
    <location>
        <begin position="135"/>
        <end position="141"/>
    </location>
</feature>
<feature type="strand" evidence="4">
    <location>
        <begin position="145"/>
        <end position="156"/>
    </location>
</feature>
<feature type="helix" evidence="4">
    <location>
        <begin position="166"/>
        <end position="172"/>
    </location>
</feature>
<feature type="helix" evidence="4">
    <location>
        <begin position="183"/>
        <end position="186"/>
    </location>
</feature>
<feature type="helix" evidence="4">
    <location>
        <begin position="192"/>
        <end position="201"/>
    </location>
</feature>
<feature type="helix" evidence="4">
    <location>
        <begin position="205"/>
        <end position="210"/>
    </location>
</feature>
<dbReference type="EC" id="2.7.7.105" evidence="1 2"/>
<dbReference type="EMBL" id="AL123456">
    <property type="protein sequence ID" value="CCP45788.1"/>
    <property type="molecule type" value="Genomic_DNA"/>
</dbReference>
<dbReference type="PIR" id="D70673">
    <property type="entry name" value="D70673"/>
</dbReference>
<dbReference type="RefSeq" id="NP_217499.1">
    <property type="nucleotide sequence ID" value="NC_000962.3"/>
</dbReference>
<dbReference type="PDB" id="6BWG">
    <property type="method" value="X-ray"/>
    <property type="resolution" value="1.99 A"/>
    <property type="chains" value="A/B/C=2-214"/>
</dbReference>
<dbReference type="PDB" id="6BWH">
    <property type="method" value="X-ray"/>
    <property type="resolution" value="2.18 A"/>
    <property type="chains" value="A/B/C=2-214"/>
</dbReference>
<dbReference type="PDBsum" id="6BWG"/>
<dbReference type="PDBsum" id="6BWH"/>
<dbReference type="SMR" id="P9WP83"/>
<dbReference type="FunCoup" id="P9WP83">
    <property type="interactions" value="132"/>
</dbReference>
<dbReference type="STRING" id="83332.Rv2983"/>
<dbReference type="PaxDb" id="83332-Rv2983"/>
<dbReference type="DNASU" id="888161"/>
<dbReference type="GeneID" id="888161"/>
<dbReference type="KEGG" id="mtu:Rv2983"/>
<dbReference type="KEGG" id="mtv:RVBD_2983"/>
<dbReference type="TubercuList" id="Rv2983"/>
<dbReference type="eggNOG" id="COG1920">
    <property type="taxonomic scope" value="Bacteria"/>
</dbReference>
<dbReference type="InParanoid" id="P9WP83"/>
<dbReference type="OrthoDB" id="9151145at2"/>
<dbReference type="BioCyc" id="MetaCyc:G185E-7238-MONOMER"/>
<dbReference type="BRENDA" id="2.7.7.105">
    <property type="organism ID" value="3445"/>
</dbReference>
<dbReference type="UniPathway" id="UPA00071"/>
<dbReference type="Proteomes" id="UP000001584">
    <property type="component" value="Chromosome"/>
</dbReference>
<dbReference type="GO" id="GO:0005525">
    <property type="term" value="F:GTP binding"/>
    <property type="evidence" value="ECO:0007669"/>
    <property type="project" value="UniProtKB-KW"/>
</dbReference>
<dbReference type="GO" id="GO:0043814">
    <property type="term" value="F:phospholactate guanylyltransferase activity"/>
    <property type="evidence" value="ECO:0007669"/>
    <property type="project" value="InterPro"/>
</dbReference>
<dbReference type="GO" id="GO:0052645">
    <property type="term" value="P:F420-0 metabolic process"/>
    <property type="evidence" value="ECO:0007669"/>
    <property type="project" value="UniProtKB-UniRule"/>
</dbReference>
<dbReference type="FunFam" id="3.90.550.10:FF:000190">
    <property type="entry name" value="2-phospho-L-lactate guanylyltransferase"/>
    <property type="match status" value="1"/>
</dbReference>
<dbReference type="Gene3D" id="3.90.550.10">
    <property type="entry name" value="Spore Coat Polysaccharide Biosynthesis Protein SpsA, Chain A"/>
    <property type="match status" value="1"/>
</dbReference>
<dbReference type="HAMAP" id="MF_02114">
    <property type="entry name" value="CofC"/>
    <property type="match status" value="1"/>
</dbReference>
<dbReference type="InterPro" id="IPR002835">
    <property type="entry name" value="CofC"/>
</dbReference>
<dbReference type="InterPro" id="IPR029044">
    <property type="entry name" value="Nucleotide-diphossugar_trans"/>
</dbReference>
<dbReference type="NCBIfam" id="TIGR03552">
    <property type="entry name" value="F420_cofC"/>
    <property type="match status" value="1"/>
</dbReference>
<dbReference type="PANTHER" id="PTHR40392">
    <property type="entry name" value="2-PHOSPHO-L-LACTATE GUANYLYLTRANSFERASE"/>
    <property type="match status" value="1"/>
</dbReference>
<dbReference type="PANTHER" id="PTHR40392:SF1">
    <property type="entry name" value="2-PHOSPHO-L-LACTATE GUANYLYLTRANSFERASE"/>
    <property type="match status" value="1"/>
</dbReference>
<dbReference type="Pfam" id="PF01983">
    <property type="entry name" value="CofC"/>
    <property type="match status" value="1"/>
</dbReference>
<dbReference type="SUPFAM" id="SSF53448">
    <property type="entry name" value="Nucleotide-diphospho-sugar transferases"/>
    <property type="match status" value="1"/>
</dbReference>
<comment type="function">
    <text evidence="1 2">Guanylyltransferase that catalyzes the activation of phosphoenolpyruvate (PEP) as enolpyruvoyl-2-diphospho-5'-guanosine, via the condensation of PEP with GTP. It is involved in the biosynthesis of coenzyme F420, a hydride carrier cofactor.</text>
</comment>
<comment type="catalytic activity">
    <reaction evidence="1 2">
        <text>phosphoenolpyruvate + GTP + H(+) = enolpyruvoyl-2-diphospho-5'-guanosine + diphosphate</text>
        <dbReference type="Rhea" id="RHEA:30519"/>
        <dbReference type="ChEBI" id="CHEBI:15378"/>
        <dbReference type="ChEBI" id="CHEBI:33019"/>
        <dbReference type="ChEBI" id="CHEBI:37565"/>
        <dbReference type="ChEBI" id="CHEBI:58702"/>
        <dbReference type="ChEBI" id="CHEBI:143701"/>
        <dbReference type="EC" id="2.7.7.105"/>
    </reaction>
</comment>
<comment type="pathway">
    <text evidence="1">Cofactor biosynthesis; coenzyme F420 biosynthesis.</text>
</comment>
<comment type="similarity">
    <text evidence="1">Belongs to the CofC family.</text>
</comment>
<reference key="1">
    <citation type="journal article" date="1998" name="Nature">
        <title>Deciphering the biology of Mycobacterium tuberculosis from the complete genome sequence.</title>
        <authorList>
            <person name="Cole S.T."/>
            <person name="Brosch R."/>
            <person name="Parkhill J."/>
            <person name="Garnier T."/>
            <person name="Churcher C.M."/>
            <person name="Harris D.E."/>
            <person name="Gordon S.V."/>
            <person name="Eiglmeier K."/>
            <person name="Gas S."/>
            <person name="Barry C.E. III"/>
            <person name="Tekaia F."/>
            <person name="Badcock K."/>
            <person name="Basham D."/>
            <person name="Brown D."/>
            <person name="Chillingworth T."/>
            <person name="Connor R."/>
            <person name="Davies R.M."/>
            <person name="Devlin K."/>
            <person name="Feltwell T."/>
            <person name="Gentles S."/>
            <person name="Hamlin N."/>
            <person name="Holroyd S."/>
            <person name="Hornsby T."/>
            <person name="Jagels K."/>
            <person name="Krogh A."/>
            <person name="McLean J."/>
            <person name="Moule S."/>
            <person name="Murphy L.D."/>
            <person name="Oliver S."/>
            <person name="Osborne J."/>
            <person name="Quail M.A."/>
            <person name="Rajandream M.A."/>
            <person name="Rogers J."/>
            <person name="Rutter S."/>
            <person name="Seeger K."/>
            <person name="Skelton S."/>
            <person name="Squares S."/>
            <person name="Squares R."/>
            <person name="Sulston J.E."/>
            <person name="Taylor K."/>
            <person name="Whitehead S."/>
            <person name="Barrell B.G."/>
        </authorList>
    </citation>
    <scope>NUCLEOTIDE SEQUENCE [LARGE SCALE GENOMIC DNA]</scope>
    <source>
        <strain>ATCC 25618 / H37Rv</strain>
    </source>
</reference>
<reference key="2">
    <citation type="journal article" date="2011" name="Mol. Cell. Proteomics">
        <title>Proteogenomic analysis of Mycobacterium tuberculosis by high resolution mass spectrometry.</title>
        <authorList>
            <person name="Kelkar D.S."/>
            <person name="Kumar D."/>
            <person name="Kumar P."/>
            <person name="Balakrishnan L."/>
            <person name="Muthusamy B."/>
            <person name="Yadav A.K."/>
            <person name="Shrivastava P."/>
            <person name="Marimuthu A."/>
            <person name="Anand S."/>
            <person name="Sundaram H."/>
            <person name="Kingsbury R."/>
            <person name="Harsha H.C."/>
            <person name="Nair B."/>
            <person name="Prasad T.S."/>
            <person name="Chauhan D.S."/>
            <person name="Katoch K."/>
            <person name="Katoch V.M."/>
            <person name="Kumar P."/>
            <person name="Chaerkady R."/>
            <person name="Ramachandran S."/>
            <person name="Dash D."/>
            <person name="Pandey A."/>
        </authorList>
    </citation>
    <scope>IDENTIFICATION BY MASS SPECTROMETRY [LARGE SCALE ANALYSIS]</scope>
    <source>
        <strain>ATCC 25618 / H37Rv</strain>
    </source>
</reference>
<reference key="3">
    <citation type="journal article" date="2019" name="Nat. Commun.">
        <title>A revised biosynthetic pathway for the cofactor F420 in prokaryotes.</title>
        <authorList>
            <person name="Bashiri G."/>
            <person name="Antoney J."/>
            <person name="Jirgis E.N.M."/>
            <person name="Shah M.V."/>
            <person name="Ney B."/>
            <person name="Copp J."/>
            <person name="Stuteley S.M."/>
            <person name="Sreebhavan S."/>
            <person name="Palmer B."/>
            <person name="Middleditch M."/>
            <person name="Tokuriki N."/>
            <person name="Greening C."/>
            <person name="Scott C."/>
            <person name="Baker E.N."/>
            <person name="Jackson C.J."/>
        </authorList>
    </citation>
    <scope>X-RAY CRYSTALLOGRAPHY (1.99 ANGSTROMS) OF 2-214 IN APOFORM AND IN COMPLEX WITH PEP</scope>
    <scope>FUNCTION</scope>
    <scope>CATALYTIC ACTIVITY</scope>
</reference>
<evidence type="ECO:0000255" key="1">
    <source>
        <dbReference type="HAMAP-Rule" id="MF_02114"/>
    </source>
</evidence>
<evidence type="ECO:0000269" key="2">
    <source>
    </source>
</evidence>
<evidence type="ECO:0000303" key="3">
    <source>
    </source>
</evidence>
<evidence type="ECO:0007829" key="4">
    <source>
        <dbReference type="PDB" id="6BWG"/>
    </source>
</evidence>
<keyword id="KW-0002">3D-structure</keyword>
<keyword id="KW-0342">GTP-binding</keyword>
<keyword id="KW-0547">Nucleotide-binding</keyword>
<keyword id="KW-0548">Nucleotidyltransferase</keyword>
<keyword id="KW-1185">Reference proteome</keyword>
<keyword id="KW-0808">Transferase</keyword>